<accession>B4TWC4</accession>
<gene>
    <name evidence="1" type="primary">yhbP</name>
    <name type="ordered locus">SeSA_A3460</name>
</gene>
<reference key="1">
    <citation type="journal article" date="2011" name="J. Bacteriol.">
        <title>Comparative genomics of 28 Salmonella enterica isolates: evidence for CRISPR-mediated adaptive sublineage evolution.</title>
        <authorList>
            <person name="Fricke W.F."/>
            <person name="Mammel M.K."/>
            <person name="McDermott P.F."/>
            <person name="Tartera C."/>
            <person name="White D.G."/>
            <person name="Leclerc J.E."/>
            <person name="Ravel J."/>
            <person name="Cebula T.A."/>
        </authorList>
    </citation>
    <scope>NUCLEOTIDE SEQUENCE [LARGE SCALE GENOMIC DNA]</scope>
    <source>
        <strain>CVM19633</strain>
    </source>
</reference>
<feature type="chain" id="PRO_1000198368" description="UPF0306 protein YhbP">
    <location>
        <begin position="1"/>
        <end position="147"/>
    </location>
</feature>
<organism>
    <name type="scientific">Salmonella schwarzengrund (strain CVM19633)</name>
    <dbReference type="NCBI Taxonomy" id="439843"/>
    <lineage>
        <taxon>Bacteria</taxon>
        <taxon>Pseudomonadati</taxon>
        <taxon>Pseudomonadota</taxon>
        <taxon>Gammaproteobacteria</taxon>
        <taxon>Enterobacterales</taxon>
        <taxon>Enterobacteriaceae</taxon>
        <taxon>Salmonella</taxon>
    </lineage>
</organism>
<protein>
    <recommendedName>
        <fullName evidence="1">UPF0306 protein YhbP</fullName>
    </recommendedName>
</protein>
<evidence type="ECO:0000255" key="1">
    <source>
        <dbReference type="HAMAP-Rule" id="MF_00764"/>
    </source>
</evidence>
<dbReference type="EMBL" id="CP001127">
    <property type="protein sequence ID" value="ACF92687.1"/>
    <property type="molecule type" value="Genomic_DNA"/>
</dbReference>
<dbReference type="RefSeq" id="WP_000380407.1">
    <property type="nucleotide sequence ID" value="NC_011094.1"/>
</dbReference>
<dbReference type="SMR" id="B4TWC4"/>
<dbReference type="KEGG" id="sew:SeSA_A3460"/>
<dbReference type="HOGENOM" id="CLU_105087_3_0_6"/>
<dbReference type="Proteomes" id="UP000001865">
    <property type="component" value="Chromosome"/>
</dbReference>
<dbReference type="Gene3D" id="2.30.110.10">
    <property type="entry name" value="Electron Transport, Fmn-binding Protein, Chain A"/>
    <property type="match status" value="1"/>
</dbReference>
<dbReference type="HAMAP" id="MF_00764">
    <property type="entry name" value="UPF0306"/>
    <property type="match status" value="1"/>
</dbReference>
<dbReference type="InterPro" id="IPR012349">
    <property type="entry name" value="Split_barrel_FMN-bd"/>
</dbReference>
<dbReference type="InterPro" id="IPR011194">
    <property type="entry name" value="UPF0306"/>
</dbReference>
<dbReference type="NCBIfam" id="NF002900">
    <property type="entry name" value="PRK03467.1"/>
    <property type="match status" value="1"/>
</dbReference>
<dbReference type="PIRSF" id="PIRSF009554">
    <property type="entry name" value="UCP009554"/>
    <property type="match status" value="1"/>
</dbReference>
<dbReference type="SUPFAM" id="SSF50475">
    <property type="entry name" value="FMN-binding split barrel"/>
    <property type="match status" value="1"/>
</dbReference>
<name>YHBP_SALSV</name>
<sequence length="147" mass="16688">MDTLTAIGRWLAKQHVVTWCVHHEGELWCANAFYLFDAQNVALYLLTDDKTRHAQMSGACAPVAGTVNGQPKTVTRIRGVQFKGVIRRLEGQESDAARKAYLRRFPVARVLPAPVWEIRLDEIKFTDNTLGFGKKLHWLRDSRAQQA</sequence>
<comment type="similarity">
    <text evidence="1">Belongs to the UPF0306 family.</text>
</comment>
<proteinExistence type="inferred from homology"/>